<protein>
    <recommendedName>
        <fullName evidence="1">Holo-[acyl-carrier-protein] synthase</fullName>
        <shortName evidence="1">Holo-ACP synthase</shortName>
        <ecNumber evidence="1">2.7.8.7</ecNumber>
    </recommendedName>
    <alternativeName>
        <fullName evidence="1">4'-phosphopantetheinyl transferase AcpS</fullName>
    </alternativeName>
</protein>
<sequence length="126" mass="14037">MAILGLGTDIVEIARIEAVIARSGDRLARRVLSDHEWSIWEQHQQPVRFLAKRFAVKEAAAKALGTGIRNGLAFNQFEVYNDELGKPKLRLWGEANLLAERMGVSAIHVTLADERHYACATVIVES</sequence>
<keyword id="KW-0963">Cytoplasm</keyword>
<keyword id="KW-0275">Fatty acid biosynthesis</keyword>
<keyword id="KW-0276">Fatty acid metabolism</keyword>
<keyword id="KW-0444">Lipid biosynthesis</keyword>
<keyword id="KW-0443">Lipid metabolism</keyword>
<keyword id="KW-0460">Magnesium</keyword>
<keyword id="KW-0479">Metal-binding</keyword>
<keyword id="KW-0808">Transferase</keyword>
<comment type="function">
    <text evidence="1">Transfers the 4'-phosphopantetheine moiety from coenzyme A to a Ser of acyl-carrier-protein.</text>
</comment>
<comment type="catalytic activity">
    <reaction evidence="1">
        <text>apo-[ACP] + CoA = holo-[ACP] + adenosine 3',5'-bisphosphate + H(+)</text>
        <dbReference type="Rhea" id="RHEA:12068"/>
        <dbReference type="Rhea" id="RHEA-COMP:9685"/>
        <dbReference type="Rhea" id="RHEA-COMP:9690"/>
        <dbReference type="ChEBI" id="CHEBI:15378"/>
        <dbReference type="ChEBI" id="CHEBI:29999"/>
        <dbReference type="ChEBI" id="CHEBI:57287"/>
        <dbReference type="ChEBI" id="CHEBI:58343"/>
        <dbReference type="ChEBI" id="CHEBI:64479"/>
        <dbReference type="EC" id="2.7.8.7"/>
    </reaction>
</comment>
<comment type="cofactor">
    <cofactor evidence="1">
        <name>Mg(2+)</name>
        <dbReference type="ChEBI" id="CHEBI:18420"/>
    </cofactor>
</comment>
<comment type="subcellular location">
    <subcellularLocation>
        <location evidence="1">Cytoplasm</location>
    </subcellularLocation>
</comment>
<comment type="similarity">
    <text evidence="1">Belongs to the P-Pant transferase superfamily. AcpS family.</text>
</comment>
<dbReference type="EC" id="2.7.8.7" evidence="1"/>
<dbReference type="EMBL" id="CP000647">
    <property type="protein sequence ID" value="ABR78298.1"/>
    <property type="molecule type" value="Genomic_DNA"/>
</dbReference>
<dbReference type="RefSeq" id="WP_004144351.1">
    <property type="nucleotide sequence ID" value="NC_009648.1"/>
</dbReference>
<dbReference type="SMR" id="A6TCH7"/>
<dbReference type="STRING" id="272620.KPN_02888"/>
<dbReference type="PaxDb" id="272620-KPN_02888"/>
<dbReference type="EnsemblBacteria" id="ABR78298">
    <property type="protein sequence ID" value="ABR78298"/>
    <property type="gene ID" value="KPN_02888"/>
</dbReference>
<dbReference type="KEGG" id="kpn:KPN_02888"/>
<dbReference type="HOGENOM" id="CLU_089696_3_1_6"/>
<dbReference type="Proteomes" id="UP000000265">
    <property type="component" value="Chromosome"/>
</dbReference>
<dbReference type="GO" id="GO:0005737">
    <property type="term" value="C:cytoplasm"/>
    <property type="evidence" value="ECO:0007669"/>
    <property type="project" value="UniProtKB-SubCell"/>
</dbReference>
<dbReference type="GO" id="GO:0008897">
    <property type="term" value="F:holo-[acyl-carrier-protein] synthase activity"/>
    <property type="evidence" value="ECO:0007669"/>
    <property type="project" value="UniProtKB-UniRule"/>
</dbReference>
<dbReference type="GO" id="GO:0000287">
    <property type="term" value="F:magnesium ion binding"/>
    <property type="evidence" value="ECO:0007669"/>
    <property type="project" value="UniProtKB-UniRule"/>
</dbReference>
<dbReference type="GO" id="GO:0006633">
    <property type="term" value="P:fatty acid biosynthetic process"/>
    <property type="evidence" value="ECO:0007669"/>
    <property type="project" value="UniProtKB-UniRule"/>
</dbReference>
<dbReference type="FunFam" id="3.90.470.20:FF:000001">
    <property type="entry name" value="Holo-[acyl-carrier-protein] synthase"/>
    <property type="match status" value="1"/>
</dbReference>
<dbReference type="Gene3D" id="3.90.470.20">
    <property type="entry name" value="4'-phosphopantetheinyl transferase domain"/>
    <property type="match status" value="1"/>
</dbReference>
<dbReference type="HAMAP" id="MF_00101">
    <property type="entry name" value="AcpS"/>
    <property type="match status" value="1"/>
</dbReference>
<dbReference type="InterPro" id="IPR008278">
    <property type="entry name" value="4-PPantetheinyl_Trfase_dom"/>
</dbReference>
<dbReference type="InterPro" id="IPR037143">
    <property type="entry name" value="4-PPantetheinyl_Trfase_dom_sf"/>
</dbReference>
<dbReference type="InterPro" id="IPR002582">
    <property type="entry name" value="ACPS"/>
</dbReference>
<dbReference type="InterPro" id="IPR004568">
    <property type="entry name" value="Ppantetheine-prot_Trfase_dom"/>
</dbReference>
<dbReference type="NCBIfam" id="TIGR00516">
    <property type="entry name" value="acpS"/>
    <property type="match status" value="1"/>
</dbReference>
<dbReference type="NCBIfam" id="TIGR00556">
    <property type="entry name" value="pantethn_trn"/>
    <property type="match status" value="1"/>
</dbReference>
<dbReference type="Pfam" id="PF01648">
    <property type="entry name" value="ACPS"/>
    <property type="match status" value="1"/>
</dbReference>
<dbReference type="SUPFAM" id="SSF56214">
    <property type="entry name" value="4'-phosphopantetheinyl transferase"/>
    <property type="match status" value="1"/>
</dbReference>
<reference key="1">
    <citation type="submission" date="2006-09" db="EMBL/GenBank/DDBJ databases">
        <authorList>
            <consortium name="The Klebsiella pneumonia Genome Sequencing Project"/>
            <person name="McClelland M."/>
            <person name="Sanderson E.K."/>
            <person name="Spieth J."/>
            <person name="Clifton W.S."/>
            <person name="Latreille P."/>
            <person name="Sabo A."/>
            <person name="Pepin K."/>
            <person name="Bhonagiri V."/>
            <person name="Porwollik S."/>
            <person name="Ali J."/>
            <person name="Wilson R.K."/>
        </authorList>
    </citation>
    <scope>NUCLEOTIDE SEQUENCE [LARGE SCALE GENOMIC DNA]</scope>
    <source>
        <strain>ATCC 700721 / MGH 78578</strain>
    </source>
</reference>
<organism>
    <name type="scientific">Klebsiella pneumoniae subsp. pneumoniae (strain ATCC 700721 / MGH 78578)</name>
    <dbReference type="NCBI Taxonomy" id="272620"/>
    <lineage>
        <taxon>Bacteria</taxon>
        <taxon>Pseudomonadati</taxon>
        <taxon>Pseudomonadota</taxon>
        <taxon>Gammaproteobacteria</taxon>
        <taxon>Enterobacterales</taxon>
        <taxon>Enterobacteriaceae</taxon>
        <taxon>Klebsiella/Raoultella group</taxon>
        <taxon>Klebsiella</taxon>
        <taxon>Klebsiella pneumoniae complex</taxon>
    </lineage>
</organism>
<evidence type="ECO:0000255" key="1">
    <source>
        <dbReference type="HAMAP-Rule" id="MF_00101"/>
    </source>
</evidence>
<name>ACPS_KLEP7</name>
<proteinExistence type="inferred from homology"/>
<accession>A6TCH7</accession>
<gene>
    <name evidence="1" type="primary">acpS</name>
    <name type="ordered locus">KPN78578_28370</name>
    <name type="ORF">KPN_02888</name>
</gene>
<feature type="chain" id="PRO_1000008435" description="Holo-[acyl-carrier-protein] synthase">
    <location>
        <begin position="1"/>
        <end position="126"/>
    </location>
</feature>
<feature type="binding site" evidence="1">
    <location>
        <position position="9"/>
    </location>
    <ligand>
        <name>Mg(2+)</name>
        <dbReference type="ChEBI" id="CHEBI:18420"/>
    </ligand>
</feature>
<feature type="binding site" evidence="1">
    <location>
        <position position="58"/>
    </location>
    <ligand>
        <name>Mg(2+)</name>
        <dbReference type="ChEBI" id="CHEBI:18420"/>
    </ligand>
</feature>